<comment type="function">
    <text evidence="1">Type-I myosin implicated in the organization of the actin cytoskeleton. Required for proper actin cytoskeleton polarization. At the cell cortex, assembles in patch-like structures together with proteins from the actin-polymerizing machinery and promotes actin assembly. Functions as actin nucleation-promoting factor (NPF) for the Arp2/3 complex (By similarity).</text>
</comment>
<comment type="subcellular location">
    <subcellularLocation>
        <location evidence="1">Cytoplasm</location>
        <location evidence="1">Cytoskeleton</location>
        <location evidence="1">Actin patch</location>
    </subcellularLocation>
</comment>
<comment type="domain">
    <text evidence="1">The myosin motor domain displays actin-stimulated ATPase activity and generates a mechanochemical force.</text>
</comment>
<comment type="domain">
    <text evidence="1">The tail domain participates in molecular interactions that specify the role of the motor domain (By similarity). It is composed of several tail homology (TH) domains, namely a putative phospholipid-binding myosin tail domain (also named TH1), an Ala- and Pro-rich domain (TH2), followed by an SH3 domain and a C-terminal acidic domain (TH3).</text>
</comment>
<comment type="similarity">
    <text evidence="7">Belongs to the TRAFAC class myosin-kinesin ATPase superfamily. Myosin family.</text>
</comment>
<proteinExistence type="inferred from homology"/>
<evidence type="ECO:0000250" key="1"/>
<evidence type="ECO:0000255" key="2"/>
<evidence type="ECO:0000255" key="3">
    <source>
        <dbReference type="PROSITE-ProRule" id="PRU00192"/>
    </source>
</evidence>
<evidence type="ECO:0000255" key="4">
    <source>
        <dbReference type="PROSITE-ProRule" id="PRU00782"/>
    </source>
</evidence>
<evidence type="ECO:0000255" key="5">
    <source>
        <dbReference type="PROSITE-ProRule" id="PRU01093"/>
    </source>
</evidence>
<evidence type="ECO:0000256" key="6">
    <source>
        <dbReference type="SAM" id="MobiDB-lite"/>
    </source>
</evidence>
<evidence type="ECO:0000305" key="7"/>
<name>MYO1_PYRO7</name>
<gene>
    <name type="primary">MYO1</name>
    <name type="ORF">MGG_00748</name>
</gene>
<reference key="1">
    <citation type="journal article" date="2005" name="Nature">
        <title>The genome sequence of the rice blast fungus Magnaporthe grisea.</title>
        <authorList>
            <person name="Dean R.A."/>
            <person name="Talbot N.J."/>
            <person name="Ebbole D.J."/>
            <person name="Farman M.L."/>
            <person name="Mitchell T.K."/>
            <person name="Orbach M.J."/>
            <person name="Thon M.R."/>
            <person name="Kulkarni R."/>
            <person name="Xu J.-R."/>
            <person name="Pan H."/>
            <person name="Read N.D."/>
            <person name="Lee Y.-H."/>
            <person name="Carbone I."/>
            <person name="Brown D."/>
            <person name="Oh Y.Y."/>
            <person name="Donofrio N."/>
            <person name="Jeong J.S."/>
            <person name="Soanes D.M."/>
            <person name="Djonovic S."/>
            <person name="Kolomiets E."/>
            <person name="Rehmeyer C."/>
            <person name="Li W."/>
            <person name="Harding M."/>
            <person name="Kim S."/>
            <person name="Lebrun M.-H."/>
            <person name="Bohnert H."/>
            <person name="Coughlan S."/>
            <person name="Butler J."/>
            <person name="Calvo S.E."/>
            <person name="Ma L.-J."/>
            <person name="Nicol R."/>
            <person name="Purcell S."/>
            <person name="Nusbaum C."/>
            <person name="Galagan J.E."/>
            <person name="Birren B.W."/>
        </authorList>
    </citation>
    <scope>NUCLEOTIDE SEQUENCE [LARGE SCALE GENOMIC DNA]</scope>
    <source>
        <strain>70-15 / ATCC MYA-4617 / FGSC 8958</strain>
    </source>
</reference>
<dbReference type="EMBL" id="CM001235">
    <property type="protein sequence ID" value="EHA48668.1"/>
    <property type="molecule type" value="Genomic_DNA"/>
</dbReference>
<dbReference type="RefSeq" id="XP_003718252.1">
    <property type="nucleotide sequence ID" value="XM_003718204.1"/>
</dbReference>
<dbReference type="SMR" id="A4RE77"/>
<dbReference type="FunCoup" id="A4RE77">
    <property type="interactions" value="313"/>
</dbReference>
<dbReference type="STRING" id="242507.A4RE77"/>
<dbReference type="EnsemblFungi" id="MGG_00748T0">
    <property type="protein sequence ID" value="MGG_00748T0"/>
    <property type="gene ID" value="MGG_00748"/>
</dbReference>
<dbReference type="GeneID" id="2674396"/>
<dbReference type="KEGG" id="mgr:MGG_00748"/>
<dbReference type="VEuPathDB" id="FungiDB:MGG_00748"/>
<dbReference type="eggNOG" id="KOG0162">
    <property type="taxonomic scope" value="Eukaryota"/>
</dbReference>
<dbReference type="HOGENOM" id="CLU_000192_7_6_1"/>
<dbReference type="InParanoid" id="A4RE77"/>
<dbReference type="OMA" id="PPEEYQM"/>
<dbReference type="OrthoDB" id="6108017at2759"/>
<dbReference type="PHI-base" id="PHI:11778"/>
<dbReference type="Proteomes" id="UP000009058">
    <property type="component" value="Chromosome 5"/>
</dbReference>
<dbReference type="GO" id="GO:0030479">
    <property type="term" value="C:actin cortical patch"/>
    <property type="evidence" value="ECO:0007669"/>
    <property type="project" value="UniProtKB-SubCell"/>
</dbReference>
<dbReference type="GO" id="GO:0051285">
    <property type="term" value="C:cell cortex of cell tip"/>
    <property type="evidence" value="ECO:0007669"/>
    <property type="project" value="EnsemblFungi"/>
</dbReference>
<dbReference type="GO" id="GO:0043332">
    <property type="term" value="C:mating projection tip"/>
    <property type="evidence" value="ECO:0007669"/>
    <property type="project" value="EnsemblFungi"/>
</dbReference>
<dbReference type="GO" id="GO:0031097">
    <property type="term" value="C:medial cortex"/>
    <property type="evidence" value="ECO:0007669"/>
    <property type="project" value="EnsemblFungi"/>
</dbReference>
<dbReference type="GO" id="GO:0045160">
    <property type="term" value="C:myosin I complex"/>
    <property type="evidence" value="ECO:0007669"/>
    <property type="project" value="EnsemblFungi"/>
</dbReference>
<dbReference type="GO" id="GO:0044853">
    <property type="term" value="C:plasma membrane raft"/>
    <property type="evidence" value="ECO:0007669"/>
    <property type="project" value="EnsemblFungi"/>
</dbReference>
<dbReference type="GO" id="GO:0005628">
    <property type="term" value="C:prospore membrane"/>
    <property type="evidence" value="ECO:0007669"/>
    <property type="project" value="EnsemblFungi"/>
</dbReference>
<dbReference type="GO" id="GO:0051015">
    <property type="term" value="F:actin filament binding"/>
    <property type="evidence" value="ECO:0007669"/>
    <property type="project" value="EnsemblFungi"/>
</dbReference>
<dbReference type="GO" id="GO:0071933">
    <property type="term" value="F:Arp2/3 complex binding"/>
    <property type="evidence" value="ECO:0007669"/>
    <property type="project" value="EnsemblFungi"/>
</dbReference>
<dbReference type="GO" id="GO:0005524">
    <property type="term" value="F:ATP binding"/>
    <property type="evidence" value="ECO:0007669"/>
    <property type="project" value="UniProtKB-KW"/>
</dbReference>
<dbReference type="GO" id="GO:0016787">
    <property type="term" value="F:hydrolase activity"/>
    <property type="evidence" value="ECO:0007669"/>
    <property type="project" value="UniProtKB-KW"/>
</dbReference>
<dbReference type="GO" id="GO:0000146">
    <property type="term" value="F:microfilament motor activity"/>
    <property type="evidence" value="ECO:0007669"/>
    <property type="project" value="EnsemblFungi"/>
</dbReference>
<dbReference type="GO" id="GO:0000147">
    <property type="term" value="P:actin cortical patch assembly"/>
    <property type="evidence" value="ECO:0007669"/>
    <property type="project" value="EnsemblFungi"/>
</dbReference>
<dbReference type="GO" id="GO:0051666">
    <property type="term" value="P:actin cortical patch localization"/>
    <property type="evidence" value="ECO:0007669"/>
    <property type="project" value="TreeGrafter"/>
</dbReference>
<dbReference type="GO" id="GO:0007015">
    <property type="term" value="P:actin filament organization"/>
    <property type="evidence" value="ECO:0007669"/>
    <property type="project" value="TreeGrafter"/>
</dbReference>
<dbReference type="GO" id="GO:0006897">
    <property type="term" value="P:endocytosis"/>
    <property type="evidence" value="ECO:0007669"/>
    <property type="project" value="EnsemblFungi"/>
</dbReference>
<dbReference type="GO" id="GO:0000281">
    <property type="term" value="P:mitotic cytokinesis"/>
    <property type="evidence" value="ECO:0007669"/>
    <property type="project" value="EnsemblFungi"/>
</dbReference>
<dbReference type="CDD" id="cd01378">
    <property type="entry name" value="MYSc_Myo1"/>
    <property type="match status" value="1"/>
</dbReference>
<dbReference type="CDD" id="cd11858">
    <property type="entry name" value="SH3_Myosin-I_fungi"/>
    <property type="match status" value="1"/>
</dbReference>
<dbReference type="FunFam" id="1.10.10.820:FF:000001">
    <property type="entry name" value="Myosin heavy chain"/>
    <property type="match status" value="1"/>
</dbReference>
<dbReference type="FunFam" id="1.20.5.4820:FF:000004">
    <property type="entry name" value="Myosin IE"/>
    <property type="match status" value="1"/>
</dbReference>
<dbReference type="FunFam" id="1.20.58.530:FF:000007">
    <property type="entry name" value="Myosin IE"/>
    <property type="match status" value="1"/>
</dbReference>
<dbReference type="Gene3D" id="1.10.10.820">
    <property type="match status" value="1"/>
</dbReference>
<dbReference type="Gene3D" id="1.20.5.4820">
    <property type="match status" value="1"/>
</dbReference>
<dbReference type="Gene3D" id="1.20.58.530">
    <property type="match status" value="1"/>
</dbReference>
<dbReference type="Gene3D" id="3.40.850.10">
    <property type="entry name" value="Kinesin motor domain"/>
    <property type="match status" value="1"/>
</dbReference>
<dbReference type="Gene3D" id="1.20.120.720">
    <property type="entry name" value="Myosin VI head, motor domain, U50 subdomain"/>
    <property type="match status" value="1"/>
</dbReference>
<dbReference type="Gene3D" id="2.30.30.40">
    <property type="entry name" value="SH3 Domains"/>
    <property type="match status" value="1"/>
</dbReference>
<dbReference type="InterPro" id="IPR035535">
    <property type="entry name" value="Fungal_myosin-I_SH3"/>
</dbReference>
<dbReference type="InterPro" id="IPR036961">
    <property type="entry name" value="Kinesin_motor_dom_sf"/>
</dbReference>
<dbReference type="InterPro" id="IPR001609">
    <property type="entry name" value="Myosin_head_motor_dom-like"/>
</dbReference>
<dbReference type="InterPro" id="IPR010926">
    <property type="entry name" value="Myosin_TH1"/>
</dbReference>
<dbReference type="InterPro" id="IPR036072">
    <property type="entry name" value="MYSc_Myo1"/>
</dbReference>
<dbReference type="InterPro" id="IPR027417">
    <property type="entry name" value="P-loop_NTPase"/>
</dbReference>
<dbReference type="InterPro" id="IPR036028">
    <property type="entry name" value="SH3-like_dom_sf"/>
</dbReference>
<dbReference type="InterPro" id="IPR001452">
    <property type="entry name" value="SH3_domain"/>
</dbReference>
<dbReference type="PANTHER" id="PTHR13140">
    <property type="entry name" value="MYOSIN"/>
    <property type="match status" value="1"/>
</dbReference>
<dbReference type="PANTHER" id="PTHR13140:SF837">
    <property type="entry name" value="MYOSIN-3-RELATED"/>
    <property type="match status" value="1"/>
</dbReference>
<dbReference type="Pfam" id="PF00063">
    <property type="entry name" value="Myosin_head"/>
    <property type="match status" value="1"/>
</dbReference>
<dbReference type="Pfam" id="PF06017">
    <property type="entry name" value="Myosin_TH1"/>
    <property type="match status" value="1"/>
</dbReference>
<dbReference type="Pfam" id="PF00018">
    <property type="entry name" value="SH3_1"/>
    <property type="match status" value="1"/>
</dbReference>
<dbReference type="PRINTS" id="PR00193">
    <property type="entry name" value="MYOSINHEAVY"/>
</dbReference>
<dbReference type="SMART" id="SM00242">
    <property type="entry name" value="MYSc"/>
    <property type="match status" value="1"/>
</dbReference>
<dbReference type="SMART" id="SM00326">
    <property type="entry name" value="SH3"/>
    <property type="match status" value="1"/>
</dbReference>
<dbReference type="SUPFAM" id="SSF52540">
    <property type="entry name" value="P-loop containing nucleoside triphosphate hydrolases"/>
    <property type="match status" value="1"/>
</dbReference>
<dbReference type="SUPFAM" id="SSF50044">
    <property type="entry name" value="SH3-domain"/>
    <property type="match status" value="1"/>
</dbReference>
<dbReference type="PROSITE" id="PS51456">
    <property type="entry name" value="MYOSIN_MOTOR"/>
    <property type="match status" value="1"/>
</dbReference>
<dbReference type="PROSITE" id="PS50002">
    <property type="entry name" value="SH3"/>
    <property type="match status" value="1"/>
</dbReference>
<dbReference type="PROSITE" id="PS51757">
    <property type="entry name" value="TH1"/>
    <property type="match status" value="1"/>
</dbReference>
<protein>
    <recommendedName>
        <fullName>Myosin-1</fullName>
    </recommendedName>
    <alternativeName>
        <fullName>Class I unconventional myosin</fullName>
    </alternativeName>
    <alternativeName>
        <fullName>Type I myosin</fullName>
    </alternativeName>
</protein>
<organism>
    <name type="scientific">Pyricularia oryzae (strain 70-15 / ATCC MYA-4617 / FGSC 8958)</name>
    <name type="common">Rice blast fungus</name>
    <name type="synonym">Magnaporthe oryzae</name>
    <dbReference type="NCBI Taxonomy" id="242507"/>
    <lineage>
        <taxon>Eukaryota</taxon>
        <taxon>Fungi</taxon>
        <taxon>Dikarya</taxon>
        <taxon>Ascomycota</taxon>
        <taxon>Pezizomycotina</taxon>
        <taxon>Sordariomycetes</taxon>
        <taxon>Sordariomycetidae</taxon>
        <taxon>Magnaporthales</taxon>
        <taxon>Pyriculariaceae</taxon>
        <taxon>Pyricularia</taxon>
    </lineage>
</organism>
<sequence>MGITRRGKDKAAAGQAVAGGASGGRARPKKATFETSKKKDVGVSDLTLLSKVSNEAINENLQKRFEGREIYTYIGHVLVSVNPFRDLGIYTDQVLDSYKGKNRLEMPPHVFAIAESAYYNMKAYKDNQCVIISGESGAGKTEAAKRIMQYIASVSGGDSTDIQQIKDMVLATNPLLESFGNAKTLRNNNSSRFGKYLQIHFNSVGEPVGADITNYLLEKSRVVGQITNERNFHIFYQFTKGASEHYRQMFGIQKPETYIYTSRSKCLDVDGIDDLAEFQDTLNAMKVIGLSQEEQDSVFRILAAILWTGNLVFREDDEGYAAVTDQSVVEFLAYLLEVDPQQLIKAITIRILTPRSGEVIESPANVAQAMATRDALAKSLYNNLFDWIVERINQSLKARQPTSNSVGILDIYGFEIFEKNSFEQLCINYVNEKLQQIFIQLTLKAEQDEYAREQIKWTPIKYFDNKIVCDLIESVRPPGVFSALKDATKTAHADPAACDRTFMQSVNGMSNAHLIPRQGSFIIKHYAGDVAYTVDGITDKNKDQLLKGLLGMFQVSQNPFLHTLFPNQVDQDNRKQPPTAGDRIRTSANALVETLMKCQPSYIRTIKPNENKSPTEYNVPNVLHQIKYLGLQENVRIRRAGFAYRQSFEKFVDRFFLLSPATSYAGEYTWQGSYEAAVKQILKDTSIPQEEWQMGVTKAFIKSPETLFALEHMRDRYWHNMATRIQRMWRAYLAYRAESATRIQTFWRKKRTGAEYLQLRDHGHRVLQGRKERRRMSILGSRRFIGDYLGINASSGPGAHIRNAIGIGSNEKTVFSCRGEILEAKFGRSSKASPRILIVTNSKFYVVAQMLVNGQVQITAEKAIPLGAIKFIGASSSRDDWFSLGVGSPQEADPLLNCVLKTEMFTQMERVMPGGFNLKIGDSIEYAKKPGKMQVVKVLKDSPNPVDFYKSGAVHTQQGEPPNSVSRPTPKGKPVPPRPITRGKLIRPGGPNGRPARGTTNRTPQPRPGGASASAVASRPVPQAQPQAQAQVAASIPVRTQQQSQTSSASVRAPPPPPPAAPPAKAKIMAKVLYDFAGQKENEMSIKEGDLIEIVQKENNGWWLAKSGNQQAWVPAAYVEEQKQAPPPVAASRPPPPAPPAANGKNKPLPPAKRPAAGKKPASLQPRDSGMSLNGSDGSRSNTPTPSLGNSLADALLARKQAMAKKDDDDDW</sequence>
<keyword id="KW-0009">Actin-binding</keyword>
<keyword id="KW-0067">ATP-binding</keyword>
<keyword id="KW-0963">Cytoplasm</keyword>
<keyword id="KW-0206">Cytoskeleton</keyword>
<keyword id="KW-0378">Hydrolase</keyword>
<keyword id="KW-0505">Motor protein</keyword>
<keyword id="KW-0518">Myosin</keyword>
<keyword id="KW-0547">Nucleotide-binding</keyword>
<keyword id="KW-1185">Reference proteome</keyword>
<keyword id="KW-0677">Repeat</keyword>
<keyword id="KW-0728">SH3 domain</keyword>
<accession>A4RE77</accession>
<accession>G4NEN8</accession>
<feature type="chain" id="PRO_0000338555" description="Myosin-1">
    <location>
        <begin position="1"/>
        <end position="1212"/>
    </location>
</feature>
<feature type="domain" description="Myosin motor" evidence="4">
    <location>
        <begin position="41"/>
        <end position="715"/>
    </location>
</feature>
<feature type="domain" description="IQ 1">
    <location>
        <begin position="719"/>
        <end position="739"/>
    </location>
</feature>
<feature type="domain" description="IQ 2">
    <location>
        <begin position="740"/>
        <end position="765"/>
    </location>
</feature>
<feature type="domain" description="TH1" evidence="5">
    <location>
        <begin position="773"/>
        <end position="962"/>
    </location>
</feature>
<feature type="domain" description="SH3" evidence="3">
    <location>
        <begin position="1065"/>
        <end position="1124"/>
    </location>
</feature>
<feature type="region of interest" description="Disordered" evidence="6">
    <location>
        <begin position="1"/>
        <end position="35"/>
    </location>
</feature>
<feature type="region of interest" description="Actin-binding" evidence="1">
    <location>
        <begin position="405"/>
        <end position="487"/>
    </location>
</feature>
<feature type="region of interest" description="Disordered" evidence="6">
    <location>
        <begin position="947"/>
        <end position="1064"/>
    </location>
</feature>
<feature type="region of interest" description="Disordered" evidence="6">
    <location>
        <begin position="1115"/>
        <end position="1212"/>
    </location>
</feature>
<feature type="compositionally biased region" description="Polar residues" evidence="6">
    <location>
        <begin position="954"/>
        <end position="966"/>
    </location>
</feature>
<feature type="compositionally biased region" description="Low complexity" evidence="6">
    <location>
        <begin position="987"/>
        <end position="998"/>
    </location>
</feature>
<feature type="compositionally biased region" description="Low complexity" evidence="6">
    <location>
        <begin position="1008"/>
        <end position="1052"/>
    </location>
</feature>
<feature type="compositionally biased region" description="Pro residues" evidence="6">
    <location>
        <begin position="1053"/>
        <end position="1062"/>
    </location>
</feature>
<feature type="compositionally biased region" description="Pro residues" evidence="6">
    <location>
        <begin position="1125"/>
        <end position="1140"/>
    </location>
</feature>
<feature type="compositionally biased region" description="Polar residues" evidence="6">
    <location>
        <begin position="1171"/>
        <end position="1190"/>
    </location>
</feature>
<feature type="binding site" evidence="2">
    <location>
        <begin position="134"/>
        <end position="141"/>
    </location>
    <ligand>
        <name>ATP</name>
        <dbReference type="ChEBI" id="CHEBI:30616"/>
    </ligand>
</feature>